<accession>A1BJ28</accession>
<feature type="chain" id="PRO_0000293772" description="Small ribosomal subunit protein uS3">
    <location>
        <begin position="1"/>
        <end position="250"/>
    </location>
</feature>
<feature type="domain" description="KH type-2" evidence="1">
    <location>
        <begin position="39"/>
        <end position="109"/>
    </location>
</feature>
<feature type="region of interest" description="Disordered" evidence="2">
    <location>
        <begin position="225"/>
        <end position="250"/>
    </location>
</feature>
<feature type="compositionally biased region" description="Basic and acidic residues" evidence="2">
    <location>
        <begin position="225"/>
        <end position="239"/>
    </location>
</feature>
<feature type="compositionally biased region" description="Basic residues" evidence="2">
    <location>
        <begin position="240"/>
        <end position="250"/>
    </location>
</feature>
<evidence type="ECO:0000255" key="1">
    <source>
        <dbReference type="HAMAP-Rule" id="MF_01309"/>
    </source>
</evidence>
<evidence type="ECO:0000256" key="2">
    <source>
        <dbReference type="SAM" id="MobiDB-lite"/>
    </source>
</evidence>
<evidence type="ECO:0000305" key="3"/>
<sequence length="250" mass="28538">MGQKVNPNGFRLGIIRDWTSRWYDDSPVIAEKIKQDHVIRNYVQARLKREKAGIARIVIERTTKHIKINIYAARPGAVVGRKGEEINNLSQELSRITGKEVKIDVVEVIKPETEAQLIGENIAYQLENRVSFRRAMKQAIQQAMRAGAEGIRIRCAGRLGGAEIARAEQYKEGKIPLHTIRANVDYASVTAHTIAGTIGIKVWVYKGEVLVQRIDAIEEDELKRINERRGDSKSRPRDPRNKRRRRTKRS</sequence>
<name>RS3_CHLPD</name>
<comment type="function">
    <text evidence="1">Binds the lower part of the 30S subunit head. Binds mRNA in the 70S ribosome, positioning it for translation.</text>
</comment>
<comment type="subunit">
    <text evidence="1">Part of the 30S ribosomal subunit. Forms a tight complex with proteins S10 and S14.</text>
</comment>
<comment type="similarity">
    <text evidence="1">Belongs to the universal ribosomal protein uS3 family.</text>
</comment>
<organism>
    <name type="scientific">Chlorobium phaeobacteroides (strain DSM 266 / SMG 266 / 2430)</name>
    <dbReference type="NCBI Taxonomy" id="290317"/>
    <lineage>
        <taxon>Bacteria</taxon>
        <taxon>Pseudomonadati</taxon>
        <taxon>Chlorobiota</taxon>
        <taxon>Chlorobiia</taxon>
        <taxon>Chlorobiales</taxon>
        <taxon>Chlorobiaceae</taxon>
        <taxon>Chlorobium/Pelodictyon group</taxon>
        <taxon>Chlorobium</taxon>
    </lineage>
</organism>
<keyword id="KW-1185">Reference proteome</keyword>
<keyword id="KW-0687">Ribonucleoprotein</keyword>
<keyword id="KW-0689">Ribosomal protein</keyword>
<keyword id="KW-0694">RNA-binding</keyword>
<keyword id="KW-0699">rRNA-binding</keyword>
<proteinExistence type="inferred from homology"/>
<gene>
    <name evidence="1" type="primary">rpsC</name>
    <name type="ordered locus">Cpha266_2417</name>
</gene>
<protein>
    <recommendedName>
        <fullName evidence="1">Small ribosomal subunit protein uS3</fullName>
    </recommendedName>
    <alternativeName>
        <fullName evidence="3">30S ribosomal protein S3</fullName>
    </alternativeName>
</protein>
<dbReference type="EMBL" id="CP000492">
    <property type="protein sequence ID" value="ABL66405.1"/>
    <property type="molecule type" value="Genomic_DNA"/>
</dbReference>
<dbReference type="RefSeq" id="WP_011746187.1">
    <property type="nucleotide sequence ID" value="NC_008639.1"/>
</dbReference>
<dbReference type="SMR" id="A1BJ28"/>
<dbReference type="STRING" id="290317.Cpha266_2417"/>
<dbReference type="KEGG" id="cph:Cpha266_2417"/>
<dbReference type="eggNOG" id="COG0092">
    <property type="taxonomic scope" value="Bacteria"/>
</dbReference>
<dbReference type="HOGENOM" id="CLU_058591_0_2_10"/>
<dbReference type="OrthoDB" id="9806396at2"/>
<dbReference type="Proteomes" id="UP000008701">
    <property type="component" value="Chromosome"/>
</dbReference>
<dbReference type="GO" id="GO:0022627">
    <property type="term" value="C:cytosolic small ribosomal subunit"/>
    <property type="evidence" value="ECO:0007669"/>
    <property type="project" value="TreeGrafter"/>
</dbReference>
<dbReference type="GO" id="GO:0003729">
    <property type="term" value="F:mRNA binding"/>
    <property type="evidence" value="ECO:0007669"/>
    <property type="project" value="UniProtKB-UniRule"/>
</dbReference>
<dbReference type="GO" id="GO:0019843">
    <property type="term" value="F:rRNA binding"/>
    <property type="evidence" value="ECO:0007669"/>
    <property type="project" value="UniProtKB-UniRule"/>
</dbReference>
<dbReference type="GO" id="GO:0003735">
    <property type="term" value="F:structural constituent of ribosome"/>
    <property type="evidence" value="ECO:0007669"/>
    <property type="project" value="InterPro"/>
</dbReference>
<dbReference type="GO" id="GO:0006412">
    <property type="term" value="P:translation"/>
    <property type="evidence" value="ECO:0007669"/>
    <property type="project" value="UniProtKB-UniRule"/>
</dbReference>
<dbReference type="CDD" id="cd02412">
    <property type="entry name" value="KH-II_30S_S3"/>
    <property type="match status" value="1"/>
</dbReference>
<dbReference type="FunFam" id="3.30.300.20:FF:000001">
    <property type="entry name" value="30S ribosomal protein S3"/>
    <property type="match status" value="1"/>
</dbReference>
<dbReference type="Gene3D" id="3.30.300.20">
    <property type="match status" value="1"/>
</dbReference>
<dbReference type="Gene3D" id="3.30.1140.32">
    <property type="entry name" value="Ribosomal protein S3, C-terminal domain"/>
    <property type="match status" value="1"/>
</dbReference>
<dbReference type="HAMAP" id="MF_01309_B">
    <property type="entry name" value="Ribosomal_uS3_B"/>
    <property type="match status" value="1"/>
</dbReference>
<dbReference type="InterPro" id="IPR004087">
    <property type="entry name" value="KH_dom"/>
</dbReference>
<dbReference type="InterPro" id="IPR015946">
    <property type="entry name" value="KH_dom-like_a/b"/>
</dbReference>
<dbReference type="InterPro" id="IPR004044">
    <property type="entry name" value="KH_dom_type_2"/>
</dbReference>
<dbReference type="InterPro" id="IPR009019">
    <property type="entry name" value="KH_sf_prok-type"/>
</dbReference>
<dbReference type="InterPro" id="IPR036419">
    <property type="entry name" value="Ribosomal_S3_C_sf"/>
</dbReference>
<dbReference type="InterPro" id="IPR005704">
    <property type="entry name" value="Ribosomal_uS3_bac-typ"/>
</dbReference>
<dbReference type="InterPro" id="IPR001351">
    <property type="entry name" value="Ribosomal_uS3_C"/>
</dbReference>
<dbReference type="InterPro" id="IPR018280">
    <property type="entry name" value="Ribosomal_uS3_CS"/>
</dbReference>
<dbReference type="NCBIfam" id="TIGR01009">
    <property type="entry name" value="rpsC_bact"/>
    <property type="match status" value="1"/>
</dbReference>
<dbReference type="PANTHER" id="PTHR11760">
    <property type="entry name" value="30S/40S RIBOSOMAL PROTEIN S3"/>
    <property type="match status" value="1"/>
</dbReference>
<dbReference type="PANTHER" id="PTHR11760:SF19">
    <property type="entry name" value="SMALL RIBOSOMAL SUBUNIT PROTEIN US3C"/>
    <property type="match status" value="1"/>
</dbReference>
<dbReference type="Pfam" id="PF07650">
    <property type="entry name" value="KH_2"/>
    <property type="match status" value="1"/>
</dbReference>
<dbReference type="Pfam" id="PF00189">
    <property type="entry name" value="Ribosomal_S3_C"/>
    <property type="match status" value="1"/>
</dbReference>
<dbReference type="SMART" id="SM00322">
    <property type="entry name" value="KH"/>
    <property type="match status" value="1"/>
</dbReference>
<dbReference type="SUPFAM" id="SSF54814">
    <property type="entry name" value="Prokaryotic type KH domain (KH-domain type II)"/>
    <property type="match status" value="1"/>
</dbReference>
<dbReference type="SUPFAM" id="SSF54821">
    <property type="entry name" value="Ribosomal protein S3 C-terminal domain"/>
    <property type="match status" value="1"/>
</dbReference>
<dbReference type="PROSITE" id="PS50823">
    <property type="entry name" value="KH_TYPE_2"/>
    <property type="match status" value="1"/>
</dbReference>
<dbReference type="PROSITE" id="PS00548">
    <property type="entry name" value="RIBOSOMAL_S3"/>
    <property type="match status" value="1"/>
</dbReference>
<reference key="1">
    <citation type="submission" date="2006-12" db="EMBL/GenBank/DDBJ databases">
        <title>Complete sequence of Chlorobium phaeobacteroides DSM 266.</title>
        <authorList>
            <consortium name="US DOE Joint Genome Institute"/>
            <person name="Copeland A."/>
            <person name="Lucas S."/>
            <person name="Lapidus A."/>
            <person name="Barry K."/>
            <person name="Detter J.C."/>
            <person name="Glavina del Rio T."/>
            <person name="Hammon N."/>
            <person name="Israni S."/>
            <person name="Pitluck S."/>
            <person name="Goltsman E."/>
            <person name="Schmutz J."/>
            <person name="Larimer F."/>
            <person name="Land M."/>
            <person name="Hauser L."/>
            <person name="Mikhailova N."/>
            <person name="Li T."/>
            <person name="Overmann J."/>
            <person name="Bryant D.A."/>
            <person name="Richardson P."/>
        </authorList>
    </citation>
    <scope>NUCLEOTIDE SEQUENCE [LARGE SCALE GENOMIC DNA]</scope>
    <source>
        <strain>DSM 266 / SMG 266 / 2430</strain>
    </source>
</reference>